<protein>
    <recommendedName>
        <fullName>TBC1 domain family member 10A</fullName>
    </recommendedName>
    <alternativeName>
        <fullName>EBP50-PDX interactor of 64 kDa</fullName>
        <shortName>EPI64 protein</shortName>
    </alternativeName>
</protein>
<organism>
    <name type="scientific">Mus musculus</name>
    <name type="common">Mouse</name>
    <dbReference type="NCBI Taxonomy" id="10090"/>
    <lineage>
        <taxon>Eukaryota</taxon>
        <taxon>Metazoa</taxon>
        <taxon>Chordata</taxon>
        <taxon>Craniata</taxon>
        <taxon>Vertebrata</taxon>
        <taxon>Euteleostomi</taxon>
        <taxon>Mammalia</taxon>
        <taxon>Eutheria</taxon>
        <taxon>Euarchontoglires</taxon>
        <taxon>Glires</taxon>
        <taxon>Rodentia</taxon>
        <taxon>Myomorpha</taxon>
        <taxon>Muroidea</taxon>
        <taxon>Muridae</taxon>
        <taxon>Murinae</taxon>
        <taxon>Mus</taxon>
        <taxon>Mus</taxon>
    </lineage>
</organism>
<keyword id="KW-0966">Cell projection</keyword>
<keyword id="KW-0343">GTPase activation</keyword>
<keyword id="KW-0344">Guanine-nucleotide releasing factor</keyword>
<keyword id="KW-0597">Phosphoprotein</keyword>
<keyword id="KW-1185">Reference proteome</keyword>
<reference key="1">
    <citation type="journal article" date="2004" name="Genome Res.">
        <title>The status, quality, and expansion of the NIH full-length cDNA project: the Mammalian Gene Collection (MGC).</title>
        <authorList>
            <consortium name="The MGC Project Team"/>
        </authorList>
    </citation>
    <scope>NUCLEOTIDE SEQUENCE [LARGE SCALE MRNA]</scope>
    <source>
        <tissue>Salivary gland</tissue>
    </source>
</reference>
<reference key="2">
    <citation type="journal article" date="2001" name="J. Cell Biol.">
        <title>Identification of EPI64, a TBC/rabGAP domain-containing microvillar protein that binds to the first PDZ domain of EBP50 and E3KARP.</title>
        <authorList>
            <person name="Reczek D."/>
            <person name="Bretscher A."/>
        </authorList>
    </citation>
    <scope>TISSUE SPECIFICITY</scope>
</reference>
<reference key="3">
    <citation type="journal article" date="2010" name="Cell">
        <title>A tissue-specific atlas of mouse protein phosphorylation and expression.</title>
        <authorList>
            <person name="Huttlin E.L."/>
            <person name="Jedrychowski M.P."/>
            <person name="Elias J.E."/>
            <person name="Goswami T."/>
            <person name="Rad R."/>
            <person name="Beausoleil S.A."/>
            <person name="Villen J."/>
            <person name="Haas W."/>
            <person name="Sowa M.E."/>
            <person name="Gygi S.P."/>
        </authorList>
    </citation>
    <scope>PHOSPHORYLATION [LARGE SCALE ANALYSIS] AT SER-39; SER-40; SER-45 AND THR-477</scope>
    <scope>IDENTIFICATION BY MASS SPECTROMETRY [LARGE SCALE ANALYSIS]</scope>
    <source>
        <tissue>Brain</tissue>
        <tissue>Kidney</tissue>
        <tissue>Liver</tissue>
        <tissue>Lung</tissue>
        <tissue>Pancreas</tissue>
        <tissue>Spleen</tissue>
        <tissue>Testis</tissue>
    </source>
</reference>
<feature type="chain" id="PRO_0000208036" description="TBC1 domain family member 10A">
    <location>
        <begin position="1"/>
        <end position="500"/>
    </location>
</feature>
<feature type="domain" description="Rab-GAP TBC" evidence="3">
    <location>
        <begin position="111"/>
        <end position="299"/>
    </location>
</feature>
<feature type="region of interest" description="Disordered" evidence="4">
    <location>
        <begin position="1"/>
        <end position="45"/>
    </location>
</feature>
<feature type="region of interest" description="Disordered" evidence="4">
    <location>
        <begin position="396"/>
        <end position="415"/>
    </location>
</feature>
<feature type="region of interest" description="Disordered" evidence="4">
    <location>
        <begin position="420"/>
        <end position="500"/>
    </location>
</feature>
<feature type="region of interest" description="Binding to the PDZ domain of EBP50" evidence="1">
    <location>
        <begin position="497"/>
        <end position="500"/>
    </location>
</feature>
<feature type="compositionally biased region" description="Basic and acidic residues" evidence="4">
    <location>
        <begin position="1"/>
        <end position="10"/>
    </location>
</feature>
<feature type="compositionally biased region" description="Polar residues" evidence="4">
    <location>
        <begin position="438"/>
        <end position="453"/>
    </location>
</feature>
<feature type="site" description="Arginine finger" evidence="1">
    <location>
        <position position="156"/>
    </location>
</feature>
<feature type="site" description="Glutamine finger" evidence="1">
    <location>
        <position position="197"/>
    </location>
</feature>
<feature type="modified residue" description="Phosphoserine" evidence="6">
    <location>
        <position position="39"/>
    </location>
</feature>
<feature type="modified residue" description="Phosphoserine" evidence="6">
    <location>
        <position position="40"/>
    </location>
</feature>
<feature type="modified residue" description="Phosphoserine" evidence="6">
    <location>
        <position position="45"/>
    </location>
</feature>
<feature type="modified residue" description="Phosphoserine" evidence="2">
    <location>
        <position position="407"/>
    </location>
</feature>
<feature type="modified residue" description="Phosphothreonine" evidence="6">
    <location>
        <position position="477"/>
    </location>
</feature>
<gene>
    <name type="primary">Tbc1d10a</name>
    <name type="synonym">Epi64</name>
    <name type="synonym">Tbc1d10</name>
</gene>
<accession>P58802</accession>
<dbReference type="EMBL" id="BC018300">
    <property type="protein sequence ID" value="AAH18300.1"/>
    <property type="molecule type" value="mRNA"/>
</dbReference>
<dbReference type="CCDS" id="CCDS56756.1"/>
<dbReference type="RefSeq" id="NP_598784.1">
    <property type="nucleotide sequence ID" value="NM_134023.2"/>
</dbReference>
<dbReference type="SMR" id="P58802"/>
<dbReference type="BioGRID" id="222145">
    <property type="interactions" value="4"/>
</dbReference>
<dbReference type="FunCoup" id="P58802">
    <property type="interactions" value="522"/>
</dbReference>
<dbReference type="STRING" id="10090.ENSMUSP00000136453"/>
<dbReference type="GlyGen" id="P58802">
    <property type="glycosylation" value="1 site, 1 O-linked glycan (1 site)"/>
</dbReference>
<dbReference type="iPTMnet" id="P58802"/>
<dbReference type="PhosphoSitePlus" id="P58802"/>
<dbReference type="CPTAC" id="non-CPTAC-3434"/>
<dbReference type="jPOST" id="P58802"/>
<dbReference type="PaxDb" id="10090-ENSMUSP00000036861"/>
<dbReference type="PeptideAtlas" id="P58802"/>
<dbReference type="ProteomicsDB" id="263069"/>
<dbReference type="Pumba" id="P58802"/>
<dbReference type="DNASU" id="103724"/>
<dbReference type="Ensembl" id="ENSMUST00000180088.2">
    <property type="protein sequence ID" value="ENSMUSP00000136453.2"/>
    <property type="gene ID" value="ENSMUSG00000034412.14"/>
</dbReference>
<dbReference type="GeneID" id="103724"/>
<dbReference type="KEGG" id="mmu:103724"/>
<dbReference type="UCSC" id="uc007huq.1">
    <property type="organism name" value="mouse"/>
</dbReference>
<dbReference type="AGR" id="MGI:2144164"/>
<dbReference type="CTD" id="83874"/>
<dbReference type="MGI" id="MGI:2144164">
    <property type="gene designation" value="Tbc1d10a"/>
</dbReference>
<dbReference type="VEuPathDB" id="HostDB:ENSMUSG00000034412"/>
<dbReference type="eggNOG" id="KOG2221">
    <property type="taxonomic scope" value="Eukaryota"/>
</dbReference>
<dbReference type="GeneTree" id="ENSGT00940000157386"/>
<dbReference type="HOGENOM" id="CLU_005350_2_0_1"/>
<dbReference type="InParanoid" id="P58802"/>
<dbReference type="OrthoDB" id="28871at9989"/>
<dbReference type="Reactome" id="R-MMU-8854214">
    <property type="pathway name" value="TBC/RABGAPs"/>
</dbReference>
<dbReference type="BioGRID-ORCS" id="103724">
    <property type="hits" value="4 hits in 77 CRISPR screens"/>
</dbReference>
<dbReference type="ChiTaRS" id="Tbc1d10a">
    <property type="organism name" value="mouse"/>
</dbReference>
<dbReference type="PRO" id="PR:P58802"/>
<dbReference type="Proteomes" id="UP000000589">
    <property type="component" value="Chromosome 11"/>
</dbReference>
<dbReference type="RNAct" id="P58802">
    <property type="molecule type" value="protein"/>
</dbReference>
<dbReference type="Bgee" id="ENSMUSG00000034412">
    <property type="expression patterns" value="Expressed in lip and 210 other cell types or tissues"/>
</dbReference>
<dbReference type="ExpressionAtlas" id="P58802">
    <property type="expression patterns" value="baseline and differential"/>
</dbReference>
<dbReference type="GO" id="GO:0005829">
    <property type="term" value="C:cytosol"/>
    <property type="evidence" value="ECO:0007669"/>
    <property type="project" value="GOC"/>
</dbReference>
<dbReference type="GO" id="GO:0005902">
    <property type="term" value="C:microvillus"/>
    <property type="evidence" value="ECO:0007669"/>
    <property type="project" value="UniProtKB-SubCell"/>
</dbReference>
<dbReference type="GO" id="GO:0005886">
    <property type="term" value="C:plasma membrane"/>
    <property type="evidence" value="ECO:0007669"/>
    <property type="project" value="Ensembl"/>
</dbReference>
<dbReference type="GO" id="GO:0005096">
    <property type="term" value="F:GTPase activator activity"/>
    <property type="evidence" value="ECO:0000250"/>
    <property type="project" value="UniProtKB"/>
</dbReference>
<dbReference type="GO" id="GO:0005085">
    <property type="term" value="F:guanyl-nucleotide exchange factor activity"/>
    <property type="evidence" value="ECO:0007669"/>
    <property type="project" value="UniProtKB-KW"/>
</dbReference>
<dbReference type="GO" id="GO:0030165">
    <property type="term" value="F:PDZ domain binding"/>
    <property type="evidence" value="ECO:0007669"/>
    <property type="project" value="Ensembl"/>
</dbReference>
<dbReference type="GO" id="GO:0045862">
    <property type="term" value="P:positive regulation of proteolysis"/>
    <property type="evidence" value="ECO:0007669"/>
    <property type="project" value="Ensembl"/>
</dbReference>
<dbReference type="GO" id="GO:0042147">
    <property type="term" value="P:retrograde transport, endosome to Golgi"/>
    <property type="evidence" value="ECO:0007669"/>
    <property type="project" value="Ensembl"/>
</dbReference>
<dbReference type="FunFam" id="1.10.10.750:FF:000001">
    <property type="entry name" value="TBC1 domain family member 10A"/>
    <property type="match status" value="1"/>
</dbReference>
<dbReference type="FunFam" id="1.10.472.80:FF:000008">
    <property type="entry name" value="TBC1 domain family member 10A"/>
    <property type="match status" value="1"/>
</dbReference>
<dbReference type="FunFam" id="1.10.8.270:FF:000007">
    <property type="entry name" value="TBC1 domain family member 10A"/>
    <property type="match status" value="1"/>
</dbReference>
<dbReference type="Gene3D" id="1.10.8.270">
    <property type="entry name" value="putative rabgap domain of human tbc1 domain family member 14 like domains"/>
    <property type="match status" value="1"/>
</dbReference>
<dbReference type="Gene3D" id="1.10.10.750">
    <property type="entry name" value="Ypt/Rab-GAP domain of gyp1p, domain 1"/>
    <property type="match status" value="1"/>
</dbReference>
<dbReference type="Gene3D" id="1.10.472.80">
    <property type="entry name" value="Ypt/Rab-GAP domain of gyp1p, domain 3"/>
    <property type="match status" value="1"/>
</dbReference>
<dbReference type="InterPro" id="IPR000195">
    <property type="entry name" value="Rab-GAP-TBC_dom"/>
</dbReference>
<dbReference type="InterPro" id="IPR035969">
    <property type="entry name" value="Rab-GAP_TBC_sf"/>
</dbReference>
<dbReference type="InterPro" id="IPR050302">
    <property type="entry name" value="Rab_GAP_TBC_domain"/>
</dbReference>
<dbReference type="PANTHER" id="PTHR47219">
    <property type="entry name" value="RAB GTPASE-ACTIVATING PROTEIN 1-LIKE"/>
    <property type="match status" value="1"/>
</dbReference>
<dbReference type="PANTHER" id="PTHR47219:SF23">
    <property type="entry name" value="TBC1 DOMAIN FAMILY MEMBER 10A"/>
    <property type="match status" value="1"/>
</dbReference>
<dbReference type="Pfam" id="PF00566">
    <property type="entry name" value="RabGAP-TBC"/>
    <property type="match status" value="1"/>
</dbReference>
<dbReference type="SMART" id="SM00164">
    <property type="entry name" value="TBC"/>
    <property type="match status" value="1"/>
</dbReference>
<dbReference type="SUPFAM" id="SSF47923">
    <property type="entry name" value="Ypt/Rab-GAP domain of gyp1p"/>
    <property type="match status" value="2"/>
</dbReference>
<dbReference type="PROSITE" id="PS50086">
    <property type="entry name" value="TBC_RABGAP"/>
    <property type="match status" value="1"/>
</dbReference>
<sequence length="500" mass="56202">MAKSSRENGPREPAAGGSLSGTRESLAQGPDAATADELSSLGSDSEANGFAERRIDKFGFIVGSQGAEGALEEVPLEVLRQRESKWLDMLNNWDKWMAKKHKKIRLRCQKGIPPSLRGRAWQYLSGGKVKLQQNPGKFDELDMSPGDPKWLDVIERDLHRQFPFHEMFVSRGGHGQQDLFRVLKAYTLYRPEEGYCQAQAPIAAVLLMHMPAEQAFWCLVQVCEKYLPGYYSEKLEAIQLDGEILFSLLQKVSPVAHKHLSRQKIDPLLYMTEWFMCAFARTLPWSSVLRVWDMFFCEGVKIIFRVGLVLLKHALGSPEKLKACQGQYETIEQLRSLSPKIMQEAFLVQEVIELPVTERQIEREHLIQLRRWQETRGELECRSLPRMHGAKAILDAEPGPRPALQPSPSIRLPPDAALLSSKAKPHKQAQKEQKRTKTSAQLDKSPGLSQATVVTAAGDACPPQGVSPKDPVPQDPTPQNLACHHSQESLTSQESEDTYL</sequence>
<evidence type="ECO:0000250" key="1"/>
<evidence type="ECO:0000250" key="2">
    <source>
        <dbReference type="UniProtKB" id="Q9BXI6"/>
    </source>
</evidence>
<evidence type="ECO:0000255" key="3">
    <source>
        <dbReference type="PROSITE-ProRule" id="PRU00163"/>
    </source>
</evidence>
<evidence type="ECO:0000256" key="4">
    <source>
        <dbReference type="SAM" id="MobiDB-lite"/>
    </source>
</evidence>
<evidence type="ECO:0000269" key="5">
    <source>
    </source>
</evidence>
<evidence type="ECO:0007744" key="6">
    <source>
    </source>
</evidence>
<comment type="function">
    <text evidence="2">GTPase-activating protein (GAP) specific for RAB27A and RAB35. Does not show GAP activity for RAB2A, RAB3A and RAB4A.</text>
</comment>
<comment type="subunit">
    <text evidence="1">Binds to the first PDZ domain of NHERF1 and NHERF2.</text>
</comment>
<comment type="subcellular location">
    <subcellularLocation>
        <location evidence="1">Cell projection</location>
        <location evidence="1">Microvillus</location>
    </subcellularLocation>
    <text evidence="1">Localizes to the microvilli-rich region of the syncytiotrophoblast.</text>
</comment>
<comment type="tissue specificity">
    <text evidence="5">Expressed in most tissues, except for skeletal muscle.</text>
</comment>
<comment type="domain">
    <text evidence="1">The arginine and glutamine fingers are critical for the GTPase-activating mechanism, they pull out Rab's 'switch 2' glutamine and insert in Rab's active site.</text>
</comment>
<name>TB10A_MOUSE</name>
<proteinExistence type="evidence at protein level"/>